<geneLocation type="chloroplast"/>
<feature type="chain" id="PRO_0000362927" description="ATP synthase subunit c, chloroplastic">
    <location>
        <begin position="1"/>
        <end position="81"/>
    </location>
</feature>
<feature type="transmembrane region" description="Helical" evidence="1">
    <location>
        <begin position="3"/>
        <end position="23"/>
    </location>
</feature>
<feature type="transmembrane region" description="Helical" evidence="1">
    <location>
        <begin position="57"/>
        <end position="77"/>
    </location>
</feature>
<feature type="site" description="Reversibly protonated during proton transport" evidence="1">
    <location>
        <position position="61"/>
    </location>
</feature>
<gene>
    <name evidence="1" type="primary">atpH</name>
    <name type="ORF">PSC017</name>
</gene>
<proteinExistence type="inferred from homology"/>
<dbReference type="EMBL" id="AY865171">
    <property type="protein sequence ID" value="AAX58147.1"/>
    <property type="molecule type" value="Genomic_DNA"/>
</dbReference>
<dbReference type="EMBL" id="DQ383816">
    <property type="protein sequence ID" value="ABD47225.1"/>
    <property type="molecule type" value="Genomic_DNA"/>
</dbReference>
<dbReference type="EMBL" id="AP007232">
    <property type="protein sequence ID" value="BAE47586.1"/>
    <property type="molecule type" value="Genomic_DNA"/>
</dbReference>
<dbReference type="RefSeq" id="YP_398321.1">
    <property type="nucleotide sequence ID" value="NC_007578.1"/>
</dbReference>
<dbReference type="SMR" id="Q56P08"/>
<dbReference type="GeneID" id="3772898"/>
<dbReference type="KEGG" id="lsv:3772898"/>
<dbReference type="OrthoDB" id="438052at2759"/>
<dbReference type="GO" id="GO:0009535">
    <property type="term" value="C:chloroplast thylakoid membrane"/>
    <property type="evidence" value="ECO:0007669"/>
    <property type="project" value="UniProtKB-SubCell"/>
</dbReference>
<dbReference type="GO" id="GO:0045259">
    <property type="term" value="C:proton-transporting ATP synthase complex"/>
    <property type="evidence" value="ECO:0007669"/>
    <property type="project" value="UniProtKB-KW"/>
</dbReference>
<dbReference type="GO" id="GO:0033177">
    <property type="term" value="C:proton-transporting two-sector ATPase complex, proton-transporting domain"/>
    <property type="evidence" value="ECO:0007669"/>
    <property type="project" value="InterPro"/>
</dbReference>
<dbReference type="GO" id="GO:0008289">
    <property type="term" value="F:lipid binding"/>
    <property type="evidence" value="ECO:0007669"/>
    <property type="project" value="UniProtKB-KW"/>
</dbReference>
<dbReference type="GO" id="GO:0046933">
    <property type="term" value="F:proton-transporting ATP synthase activity, rotational mechanism"/>
    <property type="evidence" value="ECO:0007669"/>
    <property type="project" value="UniProtKB-UniRule"/>
</dbReference>
<dbReference type="CDD" id="cd18183">
    <property type="entry name" value="ATP-synt_Fo_c_ATPH"/>
    <property type="match status" value="1"/>
</dbReference>
<dbReference type="FunFam" id="1.20.20.10:FF:000001">
    <property type="entry name" value="ATP synthase subunit c, chloroplastic"/>
    <property type="match status" value="1"/>
</dbReference>
<dbReference type="Gene3D" id="1.20.20.10">
    <property type="entry name" value="F1F0 ATP synthase subunit C"/>
    <property type="match status" value="1"/>
</dbReference>
<dbReference type="HAMAP" id="MF_01396">
    <property type="entry name" value="ATP_synth_c_bact"/>
    <property type="match status" value="1"/>
</dbReference>
<dbReference type="InterPro" id="IPR005953">
    <property type="entry name" value="ATP_synth_csu_bac/chlpt"/>
</dbReference>
<dbReference type="InterPro" id="IPR000454">
    <property type="entry name" value="ATP_synth_F0_csu"/>
</dbReference>
<dbReference type="InterPro" id="IPR020537">
    <property type="entry name" value="ATP_synth_F0_csu_DDCD_BS"/>
</dbReference>
<dbReference type="InterPro" id="IPR038662">
    <property type="entry name" value="ATP_synth_F0_csu_sf"/>
</dbReference>
<dbReference type="InterPro" id="IPR002379">
    <property type="entry name" value="ATPase_proteolipid_c-like_dom"/>
</dbReference>
<dbReference type="InterPro" id="IPR035921">
    <property type="entry name" value="F/V-ATP_Csub_sf"/>
</dbReference>
<dbReference type="NCBIfam" id="TIGR01260">
    <property type="entry name" value="ATP_synt_c"/>
    <property type="match status" value="1"/>
</dbReference>
<dbReference type="NCBIfam" id="NF005608">
    <property type="entry name" value="PRK07354.1"/>
    <property type="match status" value="1"/>
</dbReference>
<dbReference type="PANTHER" id="PTHR10031">
    <property type="entry name" value="ATP SYNTHASE LIPID-BINDING PROTEIN, MITOCHONDRIAL"/>
    <property type="match status" value="1"/>
</dbReference>
<dbReference type="PANTHER" id="PTHR10031:SF0">
    <property type="entry name" value="ATPASE PROTEIN 9"/>
    <property type="match status" value="1"/>
</dbReference>
<dbReference type="Pfam" id="PF00137">
    <property type="entry name" value="ATP-synt_C"/>
    <property type="match status" value="1"/>
</dbReference>
<dbReference type="PRINTS" id="PR00124">
    <property type="entry name" value="ATPASEC"/>
</dbReference>
<dbReference type="SUPFAM" id="SSF81333">
    <property type="entry name" value="F1F0 ATP synthase subunit C"/>
    <property type="match status" value="1"/>
</dbReference>
<dbReference type="PROSITE" id="PS00605">
    <property type="entry name" value="ATPASE_C"/>
    <property type="match status" value="1"/>
</dbReference>
<sequence length="81" mass="7990">MNPLISAASVIAAGLAVGLASIGPGVGQGTAAGQAVEGIARQPEAEGKIRGTLLLSLAFMEALTIYGLVVALALLFANPFV</sequence>
<evidence type="ECO:0000255" key="1">
    <source>
        <dbReference type="HAMAP-Rule" id="MF_01396"/>
    </source>
</evidence>
<organism>
    <name type="scientific">Lactuca sativa</name>
    <name type="common">Garden lettuce</name>
    <dbReference type="NCBI Taxonomy" id="4236"/>
    <lineage>
        <taxon>Eukaryota</taxon>
        <taxon>Viridiplantae</taxon>
        <taxon>Streptophyta</taxon>
        <taxon>Embryophyta</taxon>
        <taxon>Tracheophyta</taxon>
        <taxon>Spermatophyta</taxon>
        <taxon>Magnoliopsida</taxon>
        <taxon>eudicotyledons</taxon>
        <taxon>Gunneridae</taxon>
        <taxon>Pentapetalae</taxon>
        <taxon>asterids</taxon>
        <taxon>campanulids</taxon>
        <taxon>Asterales</taxon>
        <taxon>Asteraceae</taxon>
        <taxon>Cichorioideae</taxon>
        <taxon>Cichorieae</taxon>
        <taxon>Lactucinae</taxon>
        <taxon>Lactuca</taxon>
    </lineage>
</organism>
<accession>Q56P08</accession>
<keyword id="KW-0066">ATP synthesis</keyword>
<keyword id="KW-0138">CF(0)</keyword>
<keyword id="KW-0150">Chloroplast</keyword>
<keyword id="KW-0375">Hydrogen ion transport</keyword>
<keyword id="KW-0406">Ion transport</keyword>
<keyword id="KW-0446">Lipid-binding</keyword>
<keyword id="KW-0472">Membrane</keyword>
<keyword id="KW-0934">Plastid</keyword>
<keyword id="KW-0793">Thylakoid</keyword>
<keyword id="KW-0812">Transmembrane</keyword>
<keyword id="KW-1133">Transmembrane helix</keyword>
<keyword id="KW-0813">Transport</keyword>
<name>ATPH_LACSA</name>
<reference key="1">
    <citation type="journal article" date="2005" name="Mol. Biol. Evol.">
        <title>Two chloroplast DNA inversions originated simultaneously during the early evolution of the sunflower family (Asteraceae).</title>
        <authorList>
            <person name="Kim K.-J."/>
            <person name="Choi K.-S."/>
            <person name="Jansen R.K."/>
        </authorList>
    </citation>
    <scope>NUCLEOTIDE SEQUENCE [GENOMIC DNA]</scope>
</reference>
<reference key="2">
    <citation type="journal article" date="2006" name="Transgenic Res.">
        <title>Efficient and stable transformation of Lactuca sativa L. cv. Cisco (lettuce) plastids.</title>
        <authorList>
            <person name="Kanamoto H."/>
            <person name="Yamashita A."/>
            <person name="Asao H."/>
            <person name="Okumura S."/>
            <person name="Takase H."/>
            <person name="Hattori M."/>
            <person name="Yokota A."/>
            <person name="Tomizawa K."/>
        </authorList>
    </citation>
    <scope>NUCLEOTIDE SEQUENCE [LARGE SCALE GENOMIC DNA]</scope>
    <source>
        <strain>cv. Cisco</strain>
    </source>
</reference>
<reference key="3">
    <citation type="submission" date="2006-01" db="EMBL/GenBank/DDBJ databases">
        <title>A comparison of the first two published chloroplast genomes in Asteraceae: Lactuca and Helianthus.</title>
        <authorList>
            <person name="Timme R.E."/>
            <person name="Kuehl J.V."/>
            <person name="Boore J.L."/>
            <person name="Jansen R.K."/>
        </authorList>
    </citation>
    <scope>NUCLEOTIDE SEQUENCE [LARGE SCALE GENOMIC DNA]</scope>
    <source>
        <strain>cv. Salinas</strain>
    </source>
</reference>
<protein>
    <recommendedName>
        <fullName evidence="1">ATP synthase subunit c, chloroplastic</fullName>
    </recommendedName>
    <alternativeName>
        <fullName evidence="1">ATP synthase F(0) sector subunit c</fullName>
    </alternativeName>
    <alternativeName>
        <fullName evidence="1">ATPase subunit III</fullName>
    </alternativeName>
    <alternativeName>
        <fullName evidence="1">F-type ATPase subunit c</fullName>
        <shortName evidence="1">F-ATPase subunit c</shortName>
    </alternativeName>
    <alternativeName>
        <fullName evidence="1">Lipid-binding protein</fullName>
    </alternativeName>
</protein>
<comment type="function">
    <text evidence="1">F(1)F(0) ATP synthase produces ATP from ADP in the presence of a proton or sodium gradient. F-type ATPases consist of two structural domains, F(1) containing the extramembraneous catalytic core and F(0) containing the membrane proton channel, linked together by a central stalk and a peripheral stalk. During catalysis, ATP synthesis in the catalytic domain of F(1) is coupled via a rotary mechanism of the central stalk subunits to proton translocation.</text>
</comment>
<comment type="function">
    <text evidence="1">Key component of the F(0) channel; it plays a direct role in translocation across the membrane. A homomeric c-ring of between 10-14 subunits forms the central stalk rotor element with the F(1) delta and epsilon subunits.</text>
</comment>
<comment type="subunit">
    <text evidence="1">F-type ATPases have 2 components, F(1) - the catalytic core - and F(0) - the membrane proton channel. F(1) has five subunits: alpha(3), beta(3), gamma(1), delta(1), epsilon(1). F(0) has four main subunits: a(1), b(1), b'(1) and c(10-14). The alpha and beta chains form an alternating ring which encloses part of the gamma chain. F(1) is attached to F(0) by a central stalk formed by the gamma and epsilon chains, while a peripheral stalk is formed by the delta, b and b' chains.</text>
</comment>
<comment type="subcellular location">
    <subcellularLocation>
        <location evidence="1">Plastid</location>
        <location evidence="1">Chloroplast thylakoid membrane</location>
        <topology evidence="1">Multi-pass membrane protein</topology>
    </subcellularLocation>
</comment>
<comment type="miscellaneous">
    <text>In plastids the F-type ATPase is also known as CF(1)CF(0).</text>
</comment>
<comment type="similarity">
    <text evidence="1">Belongs to the ATPase C chain family.</text>
</comment>